<name>SYY_THEON</name>
<proteinExistence type="inferred from homology"/>
<organism>
    <name type="scientific">Thermococcus onnurineus (strain NA1)</name>
    <dbReference type="NCBI Taxonomy" id="523850"/>
    <lineage>
        <taxon>Archaea</taxon>
        <taxon>Methanobacteriati</taxon>
        <taxon>Methanobacteriota</taxon>
        <taxon>Thermococci</taxon>
        <taxon>Thermococcales</taxon>
        <taxon>Thermococcaceae</taxon>
        <taxon>Thermococcus</taxon>
    </lineage>
</organism>
<feature type="chain" id="PRO_1000189476" description="Tyrosine--tRNA ligase">
    <location>
        <begin position="1"/>
        <end position="375"/>
    </location>
</feature>
<feature type="short sequence motif" description="'KMSKS' region">
    <location>
        <begin position="251"/>
        <end position="255"/>
    </location>
</feature>
<feature type="binding site" evidence="1">
    <location>
        <position position="37"/>
    </location>
    <ligand>
        <name>L-tyrosine</name>
        <dbReference type="ChEBI" id="CHEBI:58315"/>
    </ligand>
</feature>
<feature type="binding site" evidence="1">
    <location>
        <position position="168"/>
    </location>
    <ligand>
        <name>L-tyrosine</name>
        <dbReference type="ChEBI" id="CHEBI:58315"/>
    </ligand>
</feature>
<feature type="binding site" evidence="1">
    <location>
        <position position="172"/>
    </location>
    <ligand>
        <name>L-tyrosine</name>
        <dbReference type="ChEBI" id="CHEBI:58315"/>
    </ligand>
</feature>
<feature type="binding site" evidence="1">
    <location>
        <position position="175"/>
    </location>
    <ligand>
        <name>L-tyrosine</name>
        <dbReference type="ChEBI" id="CHEBI:58315"/>
    </ligand>
</feature>
<feature type="binding site" evidence="1">
    <location>
        <position position="190"/>
    </location>
    <ligand>
        <name>L-tyrosine</name>
        <dbReference type="ChEBI" id="CHEBI:58315"/>
    </ligand>
</feature>
<feature type="binding site" evidence="1">
    <location>
        <position position="254"/>
    </location>
    <ligand>
        <name>ATP</name>
        <dbReference type="ChEBI" id="CHEBI:30616"/>
    </ligand>
</feature>
<protein>
    <recommendedName>
        <fullName evidence="1">Tyrosine--tRNA ligase</fullName>
        <ecNumber evidence="1">6.1.1.1</ecNumber>
    </recommendedName>
    <alternativeName>
        <fullName evidence="1">Tyrosyl-tRNA synthetase</fullName>
        <shortName evidence="1">TyrRS</shortName>
    </alternativeName>
</protein>
<gene>
    <name evidence="1" type="primary">tyrS</name>
    <name type="ordered locus">TON_0981</name>
</gene>
<comment type="function">
    <text evidence="1">Catalyzes the attachment of tyrosine to tRNA(Tyr) in a two-step reaction: tyrosine is first activated by ATP to form Tyr-AMP and then transferred to the acceptor end of tRNA(Tyr).</text>
</comment>
<comment type="catalytic activity">
    <reaction evidence="1">
        <text>tRNA(Tyr) + L-tyrosine + ATP = L-tyrosyl-tRNA(Tyr) + AMP + diphosphate + H(+)</text>
        <dbReference type="Rhea" id="RHEA:10220"/>
        <dbReference type="Rhea" id="RHEA-COMP:9706"/>
        <dbReference type="Rhea" id="RHEA-COMP:9707"/>
        <dbReference type="ChEBI" id="CHEBI:15378"/>
        <dbReference type="ChEBI" id="CHEBI:30616"/>
        <dbReference type="ChEBI" id="CHEBI:33019"/>
        <dbReference type="ChEBI" id="CHEBI:58315"/>
        <dbReference type="ChEBI" id="CHEBI:78442"/>
        <dbReference type="ChEBI" id="CHEBI:78536"/>
        <dbReference type="ChEBI" id="CHEBI:456215"/>
        <dbReference type="EC" id="6.1.1.1"/>
    </reaction>
</comment>
<comment type="subunit">
    <text evidence="1">Homodimer.</text>
</comment>
<comment type="subcellular location">
    <subcellularLocation>
        <location evidence="1">Cytoplasm</location>
    </subcellularLocation>
</comment>
<comment type="similarity">
    <text evidence="1">Belongs to the class-I aminoacyl-tRNA synthetase family. TyrS type 4 subfamily.</text>
</comment>
<accession>B6YWK6</accession>
<evidence type="ECO:0000255" key="1">
    <source>
        <dbReference type="HAMAP-Rule" id="MF_02009"/>
    </source>
</evidence>
<keyword id="KW-0030">Aminoacyl-tRNA synthetase</keyword>
<keyword id="KW-0067">ATP-binding</keyword>
<keyword id="KW-0963">Cytoplasm</keyword>
<keyword id="KW-0436">Ligase</keyword>
<keyword id="KW-0547">Nucleotide-binding</keyword>
<keyword id="KW-0648">Protein biosynthesis</keyword>
<reference key="1">
    <citation type="journal article" date="2008" name="J. Bacteriol.">
        <title>The complete genome sequence of Thermococcus onnurineus NA1 reveals a mixed heterotrophic and carboxydotrophic metabolism.</title>
        <authorList>
            <person name="Lee H.S."/>
            <person name="Kang S.G."/>
            <person name="Bae S.S."/>
            <person name="Lim J.K."/>
            <person name="Cho Y."/>
            <person name="Kim Y.J."/>
            <person name="Jeon J.H."/>
            <person name="Cha S.-S."/>
            <person name="Kwon K.K."/>
            <person name="Kim H.-T."/>
            <person name="Park C.-J."/>
            <person name="Lee H.-W."/>
            <person name="Kim S.I."/>
            <person name="Chun J."/>
            <person name="Colwell R.R."/>
            <person name="Kim S.-J."/>
            <person name="Lee J.-H."/>
        </authorList>
    </citation>
    <scope>NUCLEOTIDE SEQUENCE [LARGE SCALE GENOMIC DNA]</scope>
    <source>
        <strain>NA1</strain>
    </source>
</reference>
<dbReference type="EC" id="6.1.1.1" evidence="1"/>
<dbReference type="EMBL" id="CP000855">
    <property type="protein sequence ID" value="ACJ16469.1"/>
    <property type="molecule type" value="Genomic_DNA"/>
</dbReference>
<dbReference type="RefSeq" id="WP_012571941.1">
    <property type="nucleotide sequence ID" value="NC_011529.1"/>
</dbReference>
<dbReference type="SMR" id="B6YWK6"/>
<dbReference type="STRING" id="523850.TON_0981"/>
<dbReference type="GeneID" id="7017285"/>
<dbReference type="KEGG" id="ton:TON_0981"/>
<dbReference type="PATRIC" id="fig|523850.10.peg.989"/>
<dbReference type="eggNOG" id="arCOG01886">
    <property type="taxonomic scope" value="Archaea"/>
</dbReference>
<dbReference type="HOGENOM" id="CLU_035267_1_1_2"/>
<dbReference type="OrthoDB" id="8389at2157"/>
<dbReference type="Proteomes" id="UP000002727">
    <property type="component" value="Chromosome"/>
</dbReference>
<dbReference type="GO" id="GO:0005737">
    <property type="term" value="C:cytoplasm"/>
    <property type="evidence" value="ECO:0007669"/>
    <property type="project" value="UniProtKB-SubCell"/>
</dbReference>
<dbReference type="GO" id="GO:0005524">
    <property type="term" value="F:ATP binding"/>
    <property type="evidence" value="ECO:0007669"/>
    <property type="project" value="UniProtKB-UniRule"/>
</dbReference>
<dbReference type="GO" id="GO:0004831">
    <property type="term" value="F:tyrosine-tRNA ligase activity"/>
    <property type="evidence" value="ECO:0007669"/>
    <property type="project" value="UniProtKB-UniRule"/>
</dbReference>
<dbReference type="GO" id="GO:0006437">
    <property type="term" value="P:tyrosyl-tRNA aminoacylation"/>
    <property type="evidence" value="ECO:0007669"/>
    <property type="project" value="UniProtKB-UniRule"/>
</dbReference>
<dbReference type="Gene3D" id="3.40.50.620">
    <property type="entry name" value="HUPs"/>
    <property type="match status" value="1"/>
</dbReference>
<dbReference type="Gene3D" id="1.10.240.10">
    <property type="entry name" value="Tyrosyl-Transfer RNA Synthetase"/>
    <property type="match status" value="1"/>
</dbReference>
<dbReference type="HAMAP" id="MF_02009">
    <property type="entry name" value="Tyr_tRNA_synth_type4"/>
    <property type="match status" value="1"/>
</dbReference>
<dbReference type="InterPro" id="IPR002305">
    <property type="entry name" value="aa-tRNA-synth_Ic"/>
</dbReference>
<dbReference type="InterPro" id="IPR014729">
    <property type="entry name" value="Rossmann-like_a/b/a_fold"/>
</dbReference>
<dbReference type="InterPro" id="IPR002307">
    <property type="entry name" value="Tyr-tRNA-ligase"/>
</dbReference>
<dbReference type="InterPro" id="IPR023678">
    <property type="entry name" value="Tyr-tRNA-ligase_4"/>
</dbReference>
<dbReference type="InterPro" id="IPR023617">
    <property type="entry name" value="Tyr-tRNA-ligase_arc/euk-type"/>
</dbReference>
<dbReference type="InterPro" id="IPR050489">
    <property type="entry name" value="Tyr-tRNA_synthase"/>
</dbReference>
<dbReference type="NCBIfam" id="NF006330">
    <property type="entry name" value="PRK08560.1"/>
    <property type="match status" value="1"/>
</dbReference>
<dbReference type="NCBIfam" id="TIGR00234">
    <property type="entry name" value="tyrS"/>
    <property type="match status" value="1"/>
</dbReference>
<dbReference type="PANTHER" id="PTHR46264:SF4">
    <property type="entry name" value="TYROSINE--TRNA LIGASE, CYTOPLASMIC"/>
    <property type="match status" value="1"/>
</dbReference>
<dbReference type="PANTHER" id="PTHR46264">
    <property type="entry name" value="TYROSINE-TRNA LIGASE"/>
    <property type="match status" value="1"/>
</dbReference>
<dbReference type="Pfam" id="PF00579">
    <property type="entry name" value="tRNA-synt_1b"/>
    <property type="match status" value="1"/>
</dbReference>
<dbReference type="PIRSF" id="PIRSF006588">
    <property type="entry name" value="TyrRS_arch_euk"/>
    <property type="match status" value="1"/>
</dbReference>
<dbReference type="SUPFAM" id="SSF52374">
    <property type="entry name" value="Nucleotidylyl transferase"/>
    <property type="match status" value="1"/>
</dbReference>
<sequence>MDIGRKIELITKRPTEELLTVENLRHLLEIGAPMQHYIGFEISGYIHLGTGLMAGAKIADLQKAGIKTRIFLADWHSWINDKLGGDLEIIQKVALTYFKEGMKQSIKVMGGDPDKVEFVLASEILEKGDYWQTVIDISKNVTLARMMRSITIMGRQMGEAIDFAKLIYPAMQVADIFYQGVTIAHAGMDQRKAHVIAIEVAQKLKYHAIEHNGEKLKPVALHHHLLLGLQEPPVWPIESEEQYKELKTQMKMSKSKPYSAVFIHDTPEEIKQKLRKAFCPAREVKYNPVLDWAEYIIFREEPTEFTIHRPAKFGGDVTYTTFEELKRDFAEGKLHPLDLKNAVAEYLIELLKPVRDYFEKHPEPLELMREIKITR</sequence>